<dbReference type="EMBL" id="Z75530">
    <property type="protein sequence ID" value="CBL43418.1"/>
    <property type="molecule type" value="Genomic_DNA"/>
</dbReference>
<dbReference type="EMBL" id="Z75530">
    <property type="protein sequence ID" value="CBL43419.1"/>
    <property type="molecule type" value="Genomic_DNA"/>
</dbReference>
<dbReference type="EMBL" id="Z75530">
    <property type="protein sequence ID" value="CBL43420.1"/>
    <property type="molecule type" value="Genomic_DNA"/>
</dbReference>
<dbReference type="PIR" id="T20021">
    <property type="entry name" value="T20021"/>
</dbReference>
<dbReference type="RefSeq" id="NP_001256609.1">
    <molecule id="Q18691-1"/>
    <property type="nucleotide sequence ID" value="NM_001269680.2"/>
</dbReference>
<dbReference type="RefSeq" id="NP_001256610.1">
    <molecule id="Q18691-2"/>
    <property type="nucleotide sequence ID" value="NM_001269681.3"/>
</dbReference>
<dbReference type="RefSeq" id="NP_001256611.1">
    <molecule id="Q18691-3"/>
    <property type="nucleotide sequence ID" value="NM_001269682.3"/>
</dbReference>
<dbReference type="SMR" id="Q18691"/>
<dbReference type="BioGRID" id="44972">
    <property type="interactions" value="2"/>
</dbReference>
<dbReference type="DIP" id="DIP-27106N"/>
<dbReference type="FunCoup" id="Q18691">
    <property type="interactions" value="1350"/>
</dbReference>
<dbReference type="IntAct" id="Q18691">
    <property type="interactions" value="1"/>
</dbReference>
<dbReference type="STRING" id="6239.C47E8.4a.1"/>
<dbReference type="PaxDb" id="6239-C47E8.4a.2"/>
<dbReference type="PeptideAtlas" id="Q18691"/>
<dbReference type="EnsemblMetazoa" id="C47E8.4a.1">
    <molecule id="Q18691-1"/>
    <property type="protein sequence ID" value="C47E8.4a.1"/>
    <property type="gene ID" value="WBGene00008143"/>
</dbReference>
<dbReference type="EnsemblMetazoa" id="C47E8.4b.1">
    <molecule id="Q18691-2"/>
    <property type="protein sequence ID" value="C47E8.4b.1"/>
    <property type="gene ID" value="WBGene00008143"/>
</dbReference>
<dbReference type="EnsemblMetazoa" id="C47E8.4c.1">
    <molecule id="Q18691-3"/>
    <property type="protein sequence ID" value="C47E8.4c.1"/>
    <property type="gene ID" value="WBGene00008143"/>
</dbReference>
<dbReference type="GeneID" id="179970"/>
<dbReference type="KEGG" id="cel:CELE_C47E8.4"/>
<dbReference type="UCSC" id="C47E8.4">
    <molecule id="Q18691-1"/>
    <property type="organism name" value="c. elegans"/>
</dbReference>
<dbReference type="AGR" id="WB:WBGene00008143"/>
<dbReference type="CTD" id="179970"/>
<dbReference type="WormBase" id="C47E8.4a">
    <molecule id="Q18691-1"/>
    <property type="protein sequence ID" value="CE44805"/>
    <property type="gene ID" value="WBGene00008143"/>
</dbReference>
<dbReference type="WormBase" id="C47E8.4b">
    <molecule id="Q18691-2"/>
    <property type="protein sequence ID" value="CE44798"/>
    <property type="gene ID" value="WBGene00008143"/>
</dbReference>
<dbReference type="WormBase" id="C47E8.4c">
    <molecule id="Q18691-3"/>
    <property type="protein sequence ID" value="CE44813"/>
    <property type="gene ID" value="WBGene00008143"/>
</dbReference>
<dbReference type="eggNOG" id="KOG2894">
    <property type="taxonomic scope" value="Eukaryota"/>
</dbReference>
<dbReference type="GeneTree" id="ENSGT00390000004735"/>
<dbReference type="HOGENOM" id="CLU_037985_1_0_1"/>
<dbReference type="InParanoid" id="Q18691"/>
<dbReference type="OMA" id="DFIWVFL"/>
<dbReference type="OrthoDB" id="1562195at2759"/>
<dbReference type="PhylomeDB" id="Q18691"/>
<dbReference type="Reactome" id="R-CEL-72163">
    <property type="pathway name" value="mRNA Splicing - Major Pathway"/>
</dbReference>
<dbReference type="PRO" id="PR:Q18691"/>
<dbReference type="Proteomes" id="UP000001940">
    <property type="component" value="Chromosome V"/>
</dbReference>
<dbReference type="Bgee" id="WBGene00008143">
    <property type="expression patterns" value="Expressed in germ line (C elegans) and 4 other cell types or tissues"/>
</dbReference>
<dbReference type="GO" id="GO:0005634">
    <property type="term" value="C:nucleus"/>
    <property type="evidence" value="ECO:0000318"/>
    <property type="project" value="GO_Central"/>
</dbReference>
<dbReference type="GO" id="GO:0006325">
    <property type="term" value="P:chromatin organization"/>
    <property type="evidence" value="ECO:0000318"/>
    <property type="project" value="GO_Central"/>
</dbReference>
<dbReference type="InterPro" id="IPR048337">
    <property type="entry name" value="FAM50A/XAP5_C"/>
</dbReference>
<dbReference type="InterPro" id="IPR007005">
    <property type="entry name" value="XAP5"/>
</dbReference>
<dbReference type="PANTHER" id="PTHR12722:SF0">
    <property type="entry name" value="PROTEIN FAM50A"/>
    <property type="match status" value="1"/>
</dbReference>
<dbReference type="PANTHER" id="PTHR12722">
    <property type="entry name" value="XAP-5 PROTEIN-RELATED"/>
    <property type="match status" value="1"/>
</dbReference>
<dbReference type="Pfam" id="PF04921">
    <property type="entry name" value="XAP5"/>
    <property type="match status" value="1"/>
</dbReference>
<comment type="alternative products">
    <event type="alternative splicing"/>
    <isoform>
        <id>Q18691-1</id>
        <name>a</name>
        <sequence type="displayed"/>
    </isoform>
    <isoform>
        <id>Q18691-2</id>
        <name>b</name>
        <sequence type="described" ref="VSP_039797"/>
    </isoform>
    <isoform>
        <id>Q18691-3</id>
        <name>c</name>
        <sequence type="described" ref="VSP_039798"/>
    </isoform>
</comment>
<comment type="disruption phenotype">
    <text evidence="2">Reduced growth and mobility. Larval lethal.</text>
</comment>
<comment type="similarity">
    <text evidence="3">Belongs to the FAM50 family.</text>
</comment>
<sequence length="326" mass="37905">MSRADEGRLIHLAKKREREKEDIEQQLRKLEEDKEKCRVGITNKFMANYETVEEVVKSKTYGLVSLDDMKNIQKNEISNRDLQVARGDQSSSTQSKDSQEAREKEEHVAKHTQKRFLSFAFDDEEDEEDAAPIIPKKRVGMDPTVDTSFLPDKEREEFLRKKKESLAAEWRVKQDAEKNEEITVAYAYWDGSSHRKNMKIKKGNTISQCLGRAIEALKKEFTELKSCTAENLMFVKEDLIIPHFYTFQDFIVTKAMGKTGPLFVFDSASDVRIRQDAALDYGESHPAKIVLRSWYEKNKHIYPASRWEPFVPSKKYGRNFDDLSDL</sequence>
<organism>
    <name type="scientific">Caenorhabditis elegans</name>
    <dbReference type="NCBI Taxonomy" id="6239"/>
    <lineage>
        <taxon>Eukaryota</taxon>
        <taxon>Metazoa</taxon>
        <taxon>Ecdysozoa</taxon>
        <taxon>Nematoda</taxon>
        <taxon>Chromadorea</taxon>
        <taxon>Rhabditida</taxon>
        <taxon>Rhabditina</taxon>
        <taxon>Rhabditomorpha</taxon>
        <taxon>Rhabditoidea</taxon>
        <taxon>Rhabditidae</taxon>
        <taxon>Peloderinae</taxon>
        <taxon>Caenorhabditis</taxon>
    </lineage>
</organism>
<name>FAM50_CAEEL</name>
<feature type="chain" id="PRO_0000326514" description="Protein FAM50 homolog">
    <location>
        <begin position="1"/>
        <end position="326"/>
    </location>
</feature>
<feature type="region of interest" description="Disordered" evidence="1">
    <location>
        <begin position="77"/>
        <end position="111"/>
    </location>
</feature>
<feature type="compositionally biased region" description="Basic and acidic residues" evidence="1">
    <location>
        <begin position="97"/>
        <end position="109"/>
    </location>
</feature>
<feature type="splice variant" id="VSP_039798" description="In isoform c." evidence="3">
    <location>
        <begin position="1"/>
        <end position="232"/>
    </location>
</feature>
<feature type="splice variant" id="VSP_039797" description="In isoform b." evidence="3">
    <location>
        <begin position="1"/>
        <end position="140"/>
    </location>
</feature>
<protein>
    <recommendedName>
        <fullName>Protein FAM50 homolog</fullName>
    </recommendedName>
</protein>
<evidence type="ECO:0000256" key="1">
    <source>
        <dbReference type="SAM" id="MobiDB-lite"/>
    </source>
</evidence>
<evidence type="ECO:0000269" key="2">
    <source>
    </source>
</evidence>
<evidence type="ECO:0000305" key="3"/>
<keyword id="KW-0025">Alternative splicing</keyword>
<keyword id="KW-1185">Reference proteome</keyword>
<gene>
    <name type="ORF">C47E8.4</name>
</gene>
<reference key="1">
    <citation type="journal article" date="1998" name="Science">
        <title>Genome sequence of the nematode C. elegans: a platform for investigating biology.</title>
        <authorList>
            <consortium name="The C. elegans sequencing consortium"/>
        </authorList>
    </citation>
    <scope>NUCLEOTIDE SEQUENCE [LARGE SCALE GENOMIC DNA]</scope>
    <scope>ALTERNATIVE SPLICING</scope>
    <source>
        <strain>Bristol N2</strain>
    </source>
</reference>
<reference key="2">
    <citation type="journal article" date="2000" name="Curr. Biol.">
        <title>RNAi analysis of genes expressed in the ovary of Caenorhabditis elegans.</title>
        <authorList>
            <person name="Piano F."/>
            <person name="Schetter A.J."/>
            <person name="Mangone M."/>
            <person name="Stein L."/>
            <person name="Kemphues K.J."/>
        </authorList>
    </citation>
    <scope>DISRUPTION PHENOTYPE</scope>
</reference>
<accession>Q18691</accession>
<accession>D5MCS3</accession>
<accession>D5MCS4</accession>
<accession>D5MCS5</accession>
<proteinExistence type="inferred from homology"/>